<gene>
    <name type="primary">ugt-56</name>
    <name type="synonym">ugt12</name>
    <name type="ORF">T04H1.8</name>
</gene>
<protein>
    <recommendedName>
        <fullName>Putative UDP-glucuronosyltransferase ugt-56</fullName>
        <shortName>UDPGT 56</shortName>
        <ecNumber>2.4.1.17</ecNumber>
    </recommendedName>
</protein>
<organism>
    <name type="scientific">Caenorhabditis elegans</name>
    <dbReference type="NCBI Taxonomy" id="6239"/>
    <lineage>
        <taxon>Eukaryota</taxon>
        <taxon>Metazoa</taxon>
        <taxon>Ecdysozoa</taxon>
        <taxon>Nematoda</taxon>
        <taxon>Chromadorea</taxon>
        <taxon>Rhabditida</taxon>
        <taxon>Rhabditina</taxon>
        <taxon>Rhabditomorpha</taxon>
        <taxon>Rhabditoidea</taxon>
        <taxon>Rhabditidae</taxon>
        <taxon>Peloderinae</taxon>
        <taxon>Caenorhabditis</taxon>
    </lineage>
</organism>
<accession>Q22181</accession>
<name>UGT56_CAEEL</name>
<proteinExistence type="inferred from homology"/>
<evidence type="ECO:0000255" key="1"/>
<evidence type="ECO:0000305" key="2"/>
<dbReference type="EC" id="2.4.1.17"/>
<dbReference type="EMBL" id="Z78200">
    <property type="protein sequence ID" value="CAB01585.2"/>
    <property type="molecule type" value="Genomic_DNA"/>
</dbReference>
<dbReference type="PIR" id="T24478">
    <property type="entry name" value="T24478"/>
</dbReference>
<dbReference type="RefSeq" id="NP_506074.2">
    <property type="nucleotide sequence ID" value="NM_073673.4"/>
</dbReference>
<dbReference type="SMR" id="Q22181"/>
<dbReference type="FunCoup" id="Q22181">
    <property type="interactions" value="173"/>
</dbReference>
<dbReference type="STRING" id="6239.T04H1.8.1"/>
<dbReference type="CAZy" id="GT1">
    <property type="family name" value="Glycosyltransferase Family 1"/>
</dbReference>
<dbReference type="GlyCosmos" id="Q22181">
    <property type="glycosylation" value="3 sites, No reported glycans"/>
</dbReference>
<dbReference type="PaxDb" id="6239-T04H1.8"/>
<dbReference type="EnsemblMetazoa" id="T04H1.8.1">
    <property type="protein sequence ID" value="T04H1.8.1"/>
    <property type="gene ID" value="WBGene00011453"/>
</dbReference>
<dbReference type="GeneID" id="188073"/>
<dbReference type="KEGG" id="cel:CELE_T04H1.8"/>
<dbReference type="UCSC" id="T04H1.8">
    <property type="organism name" value="c. elegans"/>
</dbReference>
<dbReference type="AGR" id="WB:WBGene00011453"/>
<dbReference type="CTD" id="188073"/>
<dbReference type="WormBase" id="T04H1.8">
    <property type="protein sequence ID" value="CE31985"/>
    <property type="gene ID" value="WBGene00011453"/>
    <property type="gene designation" value="ugt-56"/>
</dbReference>
<dbReference type="eggNOG" id="KOG1192">
    <property type="taxonomic scope" value="Eukaryota"/>
</dbReference>
<dbReference type="GeneTree" id="ENSGT00970000196326"/>
<dbReference type="HOGENOM" id="CLU_012949_1_2_1"/>
<dbReference type="InParanoid" id="Q22181"/>
<dbReference type="OMA" id="VYFTARI"/>
<dbReference type="OrthoDB" id="5818197at2759"/>
<dbReference type="PhylomeDB" id="Q22181"/>
<dbReference type="PRO" id="PR:Q22181"/>
<dbReference type="Proteomes" id="UP000001940">
    <property type="component" value="Chromosome V"/>
</dbReference>
<dbReference type="Bgee" id="WBGene00011453">
    <property type="expression patterns" value="Expressed in larva and 3 other cell types or tissues"/>
</dbReference>
<dbReference type="GO" id="GO:0016020">
    <property type="term" value="C:membrane"/>
    <property type="evidence" value="ECO:0007669"/>
    <property type="project" value="UniProtKB-SubCell"/>
</dbReference>
<dbReference type="GO" id="GO:0015020">
    <property type="term" value="F:glucuronosyltransferase activity"/>
    <property type="evidence" value="ECO:0007669"/>
    <property type="project" value="UniProtKB-EC"/>
</dbReference>
<dbReference type="GO" id="GO:0008194">
    <property type="term" value="F:UDP-glycosyltransferase activity"/>
    <property type="evidence" value="ECO:0000318"/>
    <property type="project" value="GO_Central"/>
</dbReference>
<dbReference type="CDD" id="cd03784">
    <property type="entry name" value="GT1_Gtf-like"/>
    <property type="match status" value="1"/>
</dbReference>
<dbReference type="FunFam" id="3.40.50.2000:FF:000038">
    <property type="entry name" value="UDP-GlucuronosylTransferase"/>
    <property type="match status" value="1"/>
</dbReference>
<dbReference type="Gene3D" id="3.40.50.2000">
    <property type="entry name" value="Glycogen Phosphorylase B"/>
    <property type="match status" value="1"/>
</dbReference>
<dbReference type="InterPro" id="IPR050271">
    <property type="entry name" value="UDP-glycosyltransferase"/>
</dbReference>
<dbReference type="InterPro" id="IPR002213">
    <property type="entry name" value="UDP_glucos_trans"/>
</dbReference>
<dbReference type="InterPro" id="IPR035595">
    <property type="entry name" value="UDP_glycos_trans_CS"/>
</dbReference>
<dbReference type="PANTHER" id="PTHR48043">
    <property type="entry name" value="EG:EG0003.4 PROTEIN-RELATED"/>
    <property type="match status" value="1"/>
</dbReference>
<dbReference type="PANTHER" id="PTHR48043:SF149">
    <property type="entry name" value="UDP-GLUCURONOSYLTRANSFERASE UGT-56-RELATED"/>
    <property type="match status" value="1"/>
</dbReference>
<dbReference type="Pfam" id="PF00201">
    <property type="entry name" value="UDPGT"/>
    <property type="match status" value="1"/>
</dbReference>
<dbReference type="SUPFAM" id="SSF53756">
    <property type="entry name" value="UDP-Glycosyltransferase/glycogen phosphorylase"/>
    <property type="match status" value="1"/>
</dbReference>
<dbReference type="PROSITE" id="PS00375">
    <property type="entry name" value="UDPGT"/>
    <property type="match status" value="1"/>
</dbReference>
<reference key="1">
    <citation type="journal article" date="1998" name="Science">
        <title>Genome sequence of the nematode C. elegans: a platform for investigating biology.</title>
        <authorList>
            <consortium name="The C. elegans sequencing consortium"/>
        </authorList>
    </citation>
    <scope>NUCLEOTIDE SEQUENCE [LARGE SCALE GENOMIC DNA]</scope>
    <source>
        <strain>Bristol N2</strain>
    </source>
</reference>
<sequence>MLWAFIVWLGALCIYGSAFDILIYAPRMMQSHVYFTARIANVLAARGHKVTVIDNVFRYDVDNELSSDIHEIISVEPSPEVTKLLNTGSLPTILWNSKASPEEQRTIMEGLGHVHRLQCTHLIENSTLIPKLQEIKFDFAIHEVFDSCGVGILEVIGVQKTVIVSSTGPMDVVPITLGISDTLNTPSLLSDYGSYLSFFEKRRNLKFLSGMLNFHEMQDSMISPLFKKYYGLKKPTGEIMRQANLLFYNIHEGSDGMRMRGRRSFDIGGIAFKDQKNLTMEYQTLLSDPRPKVLVSFGTAATSSHMPQNLKNSLMTAMKQMNNVLFIWKYEMEDNFTKQEELTTNIIFKKFLPQTDLLASSKIDLFVTHCGQNSLLEAFNSGVRVLAVPLFGDQHRNAKLAFENGLIEILPKSDIETPAKIVKAVKTGLEPNAKLDQNIVLISSLLRNSKENAENLLISTIEATYSTEFPPNFSKFPKNYHPNTLVRLIDSSIALVFMLFIFVFVNHFRKNYVGFKYPLSFSTK</sequence>
<keyword id="KW-0325">Glycoprotein</keyword>
<keyword id="KW-0328">Glycosyltransferase</keyword>
<keyword id="KW-0472">Membrane</keyword>
<keyword id="KW-1185">Reference proteome</keyword>
<keyword id="KW-0732">Signal</keyword>
<keyword id="KW-0808">Transferase</keyword>
<keyword id="KW-0812">Transmembrane</keyword>
<keyword id="KW-1133">Transmembrane helix</keyword>
<comment type="catalytic activity">
    <reaction>
        <text>glucuronate acceptor + UDP-alpha-D-glucuronate = acceptor beta-D-glucuronoside + UDP + H(+)</text>
        <dbReference type="Rhea" id="RHEA:21032"/>
        <dbReference type="ChEBI" id="CHEBI:15378"/>
        <dbReference type="ChEBI" id="CHEBI:58052"/>
        <dbReference type="ChEBI" id="CHEBI:58223"/>
        <dbReference type="ChEBI" id="CHEBI:132367"/>
        <dbReference type="ChEBI" id="CHEBI:132368"/>
        <dbReference type="EC" id="2.4.1.17"/>
    </reaction>
</comment>
<comment type="subcellular location">
    <subcellularLocation>
        <location evidence="2">Membrane</location>
        <topology evidence="2">Single-pass membrane protein</topology>
    </subcellularLocation>
</comment>
<comment type="similarity">
    <text evidence="2">Belongs to the UDP-glycosyltransferase family.</text>
</comment>
<feature type="signal peptide" evidence="1">
    <location>
        <begin position="1"/>
        <end position="20"/>
    </location>
</feature>
<feature type="chain" id="PRO_0000036052" description="Putative UDP-glucuronosyltransferase ugt-56">
    <location>
        <begin position="21"/>
        <end position="524"/>
    </location>
</feature>
<feature type="transmembrane region" description="Helical" evidence="1">
    <location>
        <begin position="488"/>
        <end position="508"/>
    </location>
</feature>
<feature type="glycosylation site" description="N-linked (GlcNAc...) asparagine" evidence="1">
    <location>
        <position position="125"/>
    </location>
</feature>
<feature type="glycosylation site" description="N-linked (GlcNAc...) asparagine" evidence="1">
    <location>
        <position position="277"/>
    </location>
</feature>
<feature type="glycosylation site" description="N-linked (GlcNAc...) asparagine" evidence="1">
    <location>
        <position position="335"/>
    </location>
</feature>